<organism>
    <name type="scientific">Chlorobium phaeovibrioides (strain DSM 265 / 1930)</name>
    <name type="common">Prosthecochloris vibrioformis (strain DSM 265)</name>
    <dbReference type="NCBI Taxonomy" id="290318"/>
    <lineage>
        <taxon>Bacteria</taxon>
        <taxon>Pseudomonadati</taxon>
        <taxon>Chlorobiota</taxon>
        <taxon>Chlorobiia</taxon>
        <taxon>Chlorobiales</taxon>
        <taxon>Chlorobiaceae</taxon>
        <taxon>Chlorobium/Pelodictyon group</taxon>
        <taxon>Chlorobium</taxon>
    </lineage>
</organism>
<dbReference type="EC" id="2.5.1.3" evidence="1"/>
<dbReference type="EMBL" id="CP000607">
    <property type="protein sequence ID" value="ABP36957.1"/>
    <property type="molecule type" value="Genomic_DNA"/>
</dbReference>
<dbReference type="SMR" id="A4SEP8"/>
<dbReference type="STRING" id="290318.Cvib_0943"/>
<dbReference type="KEGG" id="pvi:Cvib_0943"/>
<dbReference type="eggNOG" id="COG0352">
    <property type="taxonomic scope" value="Bacteria"/>
</dbReference>
<dbReference type="HOGENOM" id="CLU_018272_3_4_10"/>
<dbReference type="OrthoDB" id="9812206at2"/>
<dbReference type="UniPathway" id="UPA00060">
    <property type="reaction ID" value="UER00141"/>
</dbReference>
<dbReference type="GO" id="GO:0005737">
    <property type="term" value="C:cytoplasm"/>
    <property type="evidence" value="ECO:0007669"/>
    <property type="project" value="TreeGrafter"/>
</dbReference>
<dbReference type="GO" id="GO:0000287">
    <property type="term" value="F:magnesium ion binding"/>
    <property type="evidence" value="ECO:0007669"/>
    <property type="project" value="UniProtKB-UniRule"/>
</dbReference>
<dbReference type="GO" id="GO:0004789">
    <property type="term" value="F:thiamine-phosphate diphosphorylase activity"/>
    <property type="evidence" value="ECO:0007669"/>
    <property type="project" value="UniProtKB-UniRule"/>
</dbReference>
<dbReference type="GO" id="GO:0009228">
    <property type="term" value="P:thiamine biosynthetic process"/>
    <property type="evidence" value="ECO:0007669"/>
    <property type="project" value="UniProtKB-KW"/>
</dbReference>
<dbReference type="GO" id="GO:0009229">
    <property type="term" value="P:thiamine diphosphate biosynthetic process"/>
    <property type="evidence" value="ECO:0007669"/>
    <property type="project" value="UniProtKB-UniRule"/>
</dbReference>
<dbReference type="CDD" id="cd00564">
    <property type="entry name" value="TMP_TenI"/>
    <property type="match status" value="1"/>
</dbReference>
<dbReference type="FunFam" id="3.20.20.70:FF:000096">
    <property type="entry name" value="Thiamine-phosphate synthase"/>
    <property type="match status" value="1"/>
</dbReference>
<dbReference type="Gene3D" id="3.20.20.70">
    <property type="entry name" value="Aldolase class I"/>
    <property type="match status" value="1"/>
</dbReference>
<dbReference type="HAMAP" id="MF_00097">
    <property type="entry name" value="TMP_synthase"/>
    <property type="match status" value="1"/>
</dbReference>
<dbReference type="InterPro" id="IPR013785">
    <property type="entry name" value="Aldolase_TIM"/>
</dbReference>
<dbReference type="InterPro" id="IPR036206">
    <property type="entry name" value="ThiamineP_synth_sf"/>
</dbReference>
<dbReference type="InterPro" id="IPR022998">
    <property type="entry name" value="ThiamineP_synth_TenI"/>
</dbReference>
<dbReference type="InterPro" id="IPR034291">
    <property type="entry name" value="TMP_synthase"/>
</dbReference>
<dbReference type="NCBIfam" id="TIGR00693">
    <property type="entry name" value="thiE"/>
    <property type="match status" value="1"/>
</dbReference>
<dbReference type="PANTHER" id="PTHR20857">
    <property type="entry name" value="THIAMINE-PHOSPHATE PYROPHOSPHORYLASE"/>
    <property type="match status" value="1"/>
</dbReference>
<dbReference type="PANTHER" id="PTHR20857:SF15">
    <property type="entry name" value="THIAMINE-PHOSPHATE SYNTHASE"/>
    <property type="match status" value="1"/>
</dbReference>
<dbReference type="Pfam" id="PF02581">
    <property type="entry name" value="TMP-TENI"/>
    <property type="match status" value="1"/>
</dbReference>
<dbReference type="SUPFAM" id="SSF51391">
    <property type="entry name" value="Thiamin phosphate synthase"/>
    <property type="match status" value="1"/>
</dbReference>
<comment type="function">
    <text evidence="1">Condenses 4-methyl-5-(beta-hydroxyethyl)thiazole monophosphate (THZ-P) and 2-methyl-4-amino-5-hydroxymethyl pyrimidine pyrophosphate (HMP-PP) to form thiamine monophosphate (TMP).</text>
</comment>
<comment type="catalytic activity">
    <reaction evidence="1">
        <text>2-[(2R,5Z)-2-carboxy-4-methylthiazol-5(2H)-ylidene]ethyl phosphate + 4-amino-2-methyl-5-(diphosphooxymethyl)pyrimidine + 2 H(+) = thiamine phosphate + CO2 + diphosphate</text>
        <dbReference type="Rhea" id="RHEA:47844"/>
        <dbReference type="ChEBI" id="CHEBI:15378"/>
        <dbReference type="ChEBI" id="CHEBI:16526"/>
        <dbReference type="ChEBI" id="CHEBI:33019"/>
        <dbReference type="ChEBI" id="CHEBI:37575"/>
        <dbReference type="ChEBI" id="CHEBI:57841"/>
        <dbReference type="ChEBI" id="CHEBI:62899"/>
        <dbReference type="EC" id="2.5.1.3"/>
    </reaction>
</comment>
<comment type="catalytic activity">
    <reaction evidence="1">
        <text>2-(2-carboxy-4-methylthiazol-5-yl)ethyl phosphate + 4-amino-2-methyl-5-(diphosphooxymethyl)pyrimidine + 2 H(+) = thiamine phosphate + CO2 + diphosphate</text>
        <dbReference type="Rhea" id="RHEA:47848"/>
        <dbReference type="ChEBI" id="CHEBI:15378"/>
        <dbReference type="ChEBI" id="CHEBI:16526"/>
        <dbReference type="ChEBI" id="CHEBI:33019"/>
        <dbReference type="ChEBI" id="CHEBI:37575"/>
        <dbReference type="ChEBI" id="CHEBI:57841"/>
        <dbReference type="ChEBI" id="CHEBI:62890"/>
        <dbReference type="EC" id="2.5.1.3"/>
    </reaction>
</comment>
<comment type="catalytic activity">
    <reaction evidence="1">
        <text>4-methyl-5-(2-phosphooxyethyl)-thiazole + 4-amino-2-methyl-5-(diphosphooxymethyl)pyrimidine + H(+) = thiamine phosphate + diphosphate</text>
        <dbReference type="Rhea" id="RHEA:22328"/>
        <dbReference type="ChEBI" id="CHEBI:15378"/>
        <dbReference type="ChEBI" id="CHEBI:33019"/>
        <dbReference type="ChEBI" id="CHEBI:37575"/>
        <dbReference type="ChEBI" id="CHEBI:57841"/>
        <dbReference type="ChEBI" id="CHEBI:58296"/>
        <dbReference type="EC" id="2.5.1.3"/>
    </reaction>
</comment>
<comment type="cofactor">
    <cofactor evidence="1">
        <name>Mg(2+)</name>
        <dbReference type="ChEBI" id="CHEBI:18420"/>
    </cofactor>
    <text evidence="1">Binds 1 Mg(2+) ion per subunit.</text>
</comment>
<comment type="pathway">
    <text evidence="1">Cofactor biosynthesis; thiamine diphosphate biosynthesis; thiamine phosphate from 4-amino-2-methyl-5-diphosphomethylpyrimidine and 4-methyl-5-(2-phosphoethyl)-thiazole: step 1/1.</text>
</comment>
<comment type="similarity">
    <text evidence="1">Belongs to the thiamine-phosphate synthase family.</text>
</comment>
<gene>
    <name evidence="1" type="primary">thiE</name>
    <name type="ordered locus">Cvib_0943</name>
</gene>
<protein>
    <recommendedName>
        <fullName evidence="1">Thiamine-phosphate synthase</fullName>
        <shortName evidence="1">TP synthase</shortName>
        <shortName evidence="1">TPS</shortName>
        <ecNumber evidence="1">2.5.1.3</ecNumber>
    </recommendedName>
    <alternativeName>
        <fullName evidence="1">Thiamine-phosphate pyrophosphorylase</fullName>
        <shortName evidence="1">TMP pyrophosphorylase</shortName>
        <shortName evidence="1">TMP-PPase</shortName>
    </alternativeName>
</protein>
<sequence>MMFPSRPMLCVITDEELPPVTFARQALWGGATILQLRNKTASGRDLCRWSEAILPLTRQHNALFIVNDRLDIALATGADGVHLGQDDLPATVARKLLGPDRIIGVSTGTREEALQAEKEGADYVGFGHIFPTGSKDKPLPPVGTLALQDTASLLSIPLIAIGGIQLENARRVISCGASGIAVISAVSRHPDPRIAAEALVREMEEGMLL</sequence>
<reference key="1">
    <citation type="submission" date="2007-03" db="EMBL/GenBank/DDBJ databases">
        <title>Complete sequence of Prosthecochloris vibrioformis DSM 265.</title>
        <authorList>
            <consortium name="US DOE Joint Genome Institute"/>
            <person name="Copeland A."/>
            <person name="Lucas S."/>
            <person name="Lapidus A."/>
            <person name="Barry K."/>
            <person name="Detter J.C."/>
            <person name="Glavina del Rio T."/>
            <person name="Hammon N."/>
            <person name="Israni S."/>
            <person name="Pitluck S."/>
            <person name="Schmutz J."/>
            <person name="Larimer F."/>
            <person name="Land M."/>
            <person name="Hauser L."/>
            <person name="Mikhailova N."/>
            <person name="Li T."/>
            <person name="Overmann J."/>
            <person name="Schuster S.C."/>
            <person name="Bryant D.A."/>
            <person name="Richardson P."/>
        </authorList>
    </citation>
    <scope>NUCLEOTIDE SEQUENCE [LARGE SCALE GENOMIC DNA]</scope>
    <source>
        <strain>DSM 265 / 1930</strain>
    </source>
</reference>
<keyword id="KW-0460">Magnesium</keyword>
<keyword id="KW-0479">Metal-binding</keyword>
<keyword id="KW-0784">Thiamine biosynthesis</keyword>
<keyword id="KW-0808">Transferase</keyword>
<feature type="chain" id="PRO_1000075573" description="Thiamine-phosphate synthase">
    <location>
        <begin position="1"/>
        <end position="209"/>
    </location>
</feature>
<feature type="binding site" evidence="1">
    <location>
        <begin position="35"/>
        <end position="39"/>
    </location>
    <ligand>
        <name>4-amino-2-methyl-5-(diphosphooxymethyl)pyrimidine</name>
        <dbReference type="ChEBI" id="CHEBI:57841"/>
    </ligand>
</feature>
<feature type="binding site" evidence="1">
    <location>
        <position position="67"/>
    </location>
    <ligand>
        <name>4-amino-2-methyl-5-(diphosphooxymethyl)pyrimidine</name>
        <dbReference type="ChEBI" id="CHEBI:57841"/>
    </ligand>
</feature>
<feature type="binding site" evidence="1">
    <location>
        <position position="68"/>
    </location>
    <ligand>
        <name>Mg(2+)</name>
        <dbReference type="ChEBI" id="CHEBI:18420"/>
    </ligand>
</feature>
<feature type="binding site" evidence="1">
    <location>
        <position position="87"/>
    </location>
    <ligand>
        <name>Mg(2+)</name>
        <dbReference type="ChEBI" id="CHEBI:18420"/>
    </ligand>
</feature>
<feature type="binding site" evidence="1">
    <location>
        <position position="106"/>
    </location>
    <ligand>
        <name>4-amino-2-methyl-5-(diphosphooxymethyl)pyrimidine</name>
        <dbReference type="ChEBI" id="CHEBI:57841"/>
    </ligand>
</feature>
<feature type="binding site" evidence="1">
    <location>
        <begin position="132"/>
        <end position="134"/>
    </location>
    <ligand>
        <name>2-[(2R,5Z)-2-carboxy-4-methylthiazol-5(2H)-ylidene]ethyl phosphate</name>
        <dbReference type="ChEBI" id="CHEBI:62899"/>
    </ligand>
</feature>
<feature type="binding site" evidence="1">
    <location>
        <position position="135"/>
    </location>
    <ligand>
        <name>4-amino-2-methyl-5-(diphosphooxymethyl)pyrimidine</name>
        <dbReference type="ChEBI" id="CHEBI:57841"/>
    </ligand>
</feature>
<feature type="binding site" evidence="1">
    <location>
        <position position="163"/>
    </location>
    <ligand>
        <name>2-[(2R,5Z)-2-carboxy-4-methylthiazol-5(2H)-ylidene]ethyl phosphate</name>
        <dbReference type="ChEBI" id="CHEBI:62899"/>
    </ligand>
</feature>
<feature type="binding site" evidence="1">
    <location>
        <begin position="183"/>
        <end position="184"/>
    </location>
    <ligand>
        <name>2-[(2R,5Z)-2-carboxy-4-methylthiazol-5(2H)-ylidene]ethyl phosphate</name>
        <dbReference type="ChEBI" id="CHEBI:62899"/>
    </ligand>
</feature>
<accession>A4SEP8</accession>
<name>THIE_CHLPM</name>
<evidence type="ECO:0000255" key="1">
    <source>
        <dbReference type="HAMAP-Rule" id="MF_00097"/>
    </source>
</evidence>
<proteinExistence type="inferred from homology"/>